<accession>P0CK10</accession>
<comment type="function">
    <molecule>Helper component proteinase</molecule>
    <text evidence="2">Required for aphid transmission and also has proteolytic activity. Only cleaves a Gly-Gly dipeptide at its own C-terminus. Interacts with virions and aphid stylets. Acts as a suppressor of RNA-mediated gene silencing, also known as post-transcriptional gene silencing (PTGS), a mechanism of plant viral defense that limits the accumulation of viral RNAs. May have RNA-binding activity.</text>
</comment>
<comment type="function">
    <molecule>Movement protein P3N-PIPO</molecule>
    <text evidence="3">Allows efficient cell to cell propagation, by bypassing the host cell wall barrier. Transports viral genome to neighboring plant cells directly through plasmosdesmata, without any budding.</text>
</comment>
<comment type="catalytic activity">
    <molecule>Helper component proteinase</molecule>
    <reaction>
        <text>Hydrolyzes a Gly-|-Gly bond at its own C-terminus, commonly in the sequence -Tyr-Xaa-Val-Gly-|-Gly, in the processing of the potyviral polyprotein.</text>
        <dbReference type="EC" id="3.4.22.45"/>
    </reaction>
</comment>
<comment type="subunit">
    <molecule>Movement protein P3N-PIPO</molecule>
    <text evidence="3">Interacts (via PIPO domain) with host PCaP1 protein; this interaction may help to anchor the movement complex to the plasma membrane from which the complex could move to the plasmodesmata.</text>
</comment>
<comment type="subcellular location">
    <molecule>Movement protein P3N-PIPO</molecule>
    <subcellularLocation>
        <location evidence="3">Host cell junction</location>
        <location evidence="3">Host plasmodesma</location>
    </subcellularLocation>
</comment>
<comment type="alternative products">
    <event type="ribosomal frameshifting"/>
    <isoform>
        <id>P0CK10-1</id>
        <name>P3N-PIPO polyprotein</name>
        <sequence type="displayed"/>
    </isoform>
    <isoform>
        <id>P09814-1</id>
        <name>Genome polyprotein</name>
        <sequence type="external"/>
    </isoform>
</comment>
<comment type="domain">
    <text evidence="1">The N-terminus of helper component proteinase is involved in interaction with stylets. The central part is involved in interaction with virions and the C-terminus is involved in cell-to cell movement of the virus (By similarity).</text>
</comment>
<comment type="PTM">
    <text evidence="1">Potyviral RNA is expressed as two polyproteins which undergo post-translational proteolytic processing. Genome polyprotein is processed by NIa-pro, P1 and HC-pro proteinases resulting in the production of at least ten individual proteins. P3N-PIPO is cleaved by P1 and HC-pro proteinases resulting in the production of three individual proteins. The P1 proteinase and the HC-pro cleave only their respective C-termini autocatalytically (By similarity).</text>
</comment>
<comment type="miscellaneous">
    <molecule>Isoform P3N-PIPO polyprotein</molecule>
    <text>Produced by -1 ribosomal frameshifting in P3 ORF.</text>
</comment>
<comment type="similarity">
    <text evidence="7">Belongs to the potyviridae P3N-PIPO polyprotein family.</text>
</comment>
<feature type="chain" id="PRO_0000420095" description="P3N-PIPO polyprotein">
    <location>
        <begin position="1"/>
        <end position="977"/>
    </location>
</feature>
<feature type="chain" id="PRO_0000420096" description="P1 protease" evidence="4">
    <location>
        <begin position="1"/>
        <end position="274"/>
    </location>
</feature>
<feature type="chain" id="PRO_0000420097" description="Helper component proteinase" evidence="4">
    <location>
        <begin position="275"/>
        <end position="731"/>
    </location>
</feature>
<feature type="chain" id="PRO_0000408554" description="Movement protein P3N-PIPO">
    <location>
        <begin position="732"/>
        <end position="977"/>
    </location>
</feature>
<feature type="domain" description="Peptidase S30" evidence="6">
    <location>
        <begin position="132"/>
        <end position="274"/>
    </location>
</feature>
<feature type="domain" description="Peptidase C6" evidence="5">
    <location>
        <begin position="609"/>
        <end position="731"/>
    </location>
</feature>
<feature type="short sequence motif" description="Involved in interaction with stylet and aphid transmission" evidence="1">
    <location>
        <begin position="325"/>
        <end position="328"/>
    </location>
</feature>
<feature type="short sequence motif" description="Involved in virions binding and aphid transmission" evidence="1">
    <location>
        <begin position="583"/>
        <end position="585"/>
    </location>
</feature>
<feature type="active site" description="For P1 proteinase activity" evidence="6">
    <location>
        <position position="183"/>
    </location>
</feature>
<feature type="active site" description="For P1 proteinase activity" evidence="6">
    <location>
        <position position="192"/>
    </location>
</feature>
<feature type="active site" description="For P1 proteinase activity" evidence="6">
    <location>
        <position position="225"/>
    </location>
</feature>
<feature type="active site" description="For helper component proteinase activity" evidence="5">
    <location>
        <position position="617"/>
    </location>
</feature>
<feature type="active site" description="For helper component proteinase activity" evidence="5">
    <location>
        <position position="690"/>
    </location>
</feature>
<feature type="site" description="Cleavage; by P1 proteinase" evidence="6">
    <location>
        <begin position="274"/>
        <end position="275"/>
    </location>
</feature>
<feature type="site" description="Cleavage; by autolysis" evidence="5">
    <location>
        <begin position="731"/>
        <end position="732"/>
    </location>
</feature>
<feature type="unsure residue">
    <location>
        <begin position="885"/>
        <end position="891"/>
    </location>
</feature>
<proteinExistence type="inferred from homology"/>
<reference key="1">
    <citation type="journal article" date="1986" name="Nucleic Acids Res.">
        <title>The nucleotide sequence of tobacco vein mottling virus RNA.</title>
        <authorList>
            <person name="Domier L.L."/>
            <person name="Franklin K.M."/>
            <person name="Shahabuddin M."/>
            <person name="Hellmann G.M."/>
            <person name="Overmeyer J.H."/>
            <person name="Hiremath S.T."/>
            <person name="Siaw M.F.E."/>
            <person name="Lomonossoff G.P."/>
            <person name="Shaw J.G."/>
            <person name="Rhoads R.E."/>
        </authorList>
    </citation>
    <scope>NUCLEOTIDE SEQUENCE [GENOMIC RNA]</scope>
</reference>
<reference key="2">
    <citation type="submission" date="1997-11" db="EMBL/GenBank/DDBJ databases">
        <authorList>
            <person name="Shaw J.G."/>
        </authorList>
    </citation>
    <scope>SEQUENCE REVISION</scope>
</reference>
<protein>
    <recommendedName>
        <fullName>P3N-PIPO polyprotein</fullName>
    </recommendedName>
    <component>
        <recommendedName>
            <fullName>P1 protease</fullName>
            <ecNumber>3.4.21.-</ecNumber>
        </recommendedName>
        <alternativeName>
            <fullName>N-terminal protein</fullName>
        </alternativeName>
        <alternativeName>
            <fullName>P1 proteinase</fullName>
        </alternativeName>
    </component>
    <component>
        <recommendedName>
            <fullName>Helper component proteinase</fullName>
            <shortName>HC-pro</shortName>
            <ecNumber>3.4.22.45</ecNumber>
        </recommendedName>
    </component>
    <component>
        <recommendedName>
            <fullName>Movement protein P3N-PIPO</fullName>
        </recommendedName>
        <alternativeName>
            <fullName>Pretty interesting potyviridae ORF</fullName>
            <shortName>PIPO</shortName>
        </alternativeName>
    </component>
</protein>
<evidence type="ECO:0000250" key="1"/>
<evidence type="ECO:0000250" key="2">
    <source>
        <dbReference type="UniProtKB" id="P04517"/>
    </source>
</evidence>
<evidence type="ECO:0000250" key="3">
    <source>
        <dbReference type="UniProtKB" id="P0CK11"/>
    </source>
</evidence>
<evidence type="ECO:0000255" key="4"/>
<evidence type="ECO:0000255" key="5">
    <source>
        <dbReference type="PROSITE-ProRule" id="PRU01080"/>
    </source>
</evidence>
<evidence type="ECO:0000255" key="6">
    <source>
        <dbReference type="PROSITE-ProRule" id="PRU01219"/>
    </source>
</evidence>
<evidence type="ECO:0000305" key="7"/>
<keyword id="KW-1031">Host cell junction</keyword>
<keyword id="KW-0945">Host-virus interaction</keyword>
<keyword id="KW-0378">Hydrolase</keyword>
<keyword id="KW-1090">Inhibition of host innate immune response by virus</keyword>
<keyword id="KW-0645">Protease</keyword>
<keyword id="KW-0688">Ribosomal frameshifting</keyword>
<keyword id="KW-0720">Serine protease</keyword>
<keyword id="KW-0941">Suppressor of RNA silencing</keyword>
<keyword id="KW-0813">Transport</keyword>
<keyword id="KW-0899">Viral immunoevasion</keyword>
<keyword id="KW-0916">Viral movement protein</keyword>
<organismHost>
    <name type="scientific">Nicotiana tabacum</name>
    <name type="common">Common tobacco</name>
    <dbReference type="NCBI Taxonomy" id="4097"/>
</organismHost>
<organismHost>
    <name type="scientific">Rumex</name>
    <dbReference type="NCBI Taxonomy" id="3618"/>
</organismHost>
<sequence length="977" mass="109980">MAATMIFGSFTHDLLGKAMSTIHSAVTAEKDIFSSIKERLERKRHGKICRMKNGSIYIKAASSTKVEKINAAAKKLADDKAAFLKAQPTIVDKIIVNEKIQVVEAEEVHKREDVQTVFFKKTKKRAPKLRATCSSSGLDNLYNAVANIAKASSLRVEVIHKKRVCGEFKQTRFGRALFIDVAHAKGHRRRIDCRMHRREQRTMHMFMRKTTKTEVRSKHLRKGDSGIVLLTQKIKGHLSGVRDEFFIVRGTCDDSLLEARARFSQSITLRATHFSTGDIFWKGFNASFQEQKAIGLDHTCTSDLPVEACGHVAALMCQSLFPCGKITCKRCIANLSNLDFDTFSELQGDRAMRILDVMRARFPSFTHTIRFLHDLFTQRRVTNPNTAAFREILRLIGDRNEAPFAHVNRLNEILLLGSKANPDSLAKASDSLLELARYLNNRTENIRNGSLKHFRNKISSKAHSNLALSCDNQLDQNGNFLWGLAGIAAKRFLNNYFETIDPEQGYDKYVIRKNPNGERKLAIGNFIISTNLEKLRDQLEGESIARVGITEECVSRKDGNYRYPCCCVTLEDGSPMYSELKMPTKNHLVIGNSGDPKYLDLPGEISNLMYIAKEGYCYINIFLAMLVNVDEANAKDFTKRVRDESVQKLGKWPSLIDVATECALLSTYYPAAASAELPRLLVDHAQKTIHVVDSYGSLNTGYHILKANTVSQLEKFASNTLESPMAQYKVGGLVYSENNDASAVKALTQAIFRPDVLSELIEKEPYLMVFALVSPGILMAMSNSGALEFGISKWISSDHSLVRMASILKTLASKVSVADTLALQKHIMRQNANFLCGELINGFQKKKSYTHATRFLLMISEENEMDDPVLNAGYRVLEASSHEIMEKNLSRTVRDILVRLKLVWKIQVNLVYAKALWKIQSRIVPKRADRLARTLQQLVAVSLPEYAQALEKQGESVSRKIFGKHFKCKTQDNMCSF</sequence>
<organism>
    <name type="scientific">Tobacco vein mottling virus</name>
    <name type="common">TVMV</name>
    <dbReference type="NCBI Taxonomy" id="12228"/>
    <lineage>
        <taxon>Viruses</taxon>
        <taxon>Riboviria</taxon>
        <taxon>Orthornavirae</taxon>
        <taxon>Pisuviricota</taxon>
        <taxon>Stelpaviricetes</taxon>
        <taxon>Patatavirales</taxon>
        <taxon>Potyviridae</taxon>
        <taxon>Potyvirus</taxon>
        <taxon>Potyvirus nicotianavenamaculae</taxon>
    </lineage>
</organism>
<name>MVP_TVMV</name>
<dbReference type="EC" id="3.4.21.-"/>
<dbReference type="EC" id="3.4.22.45"/>
<dbReference type="EMBL" id="X04083">
    <property type="status" value="NOT_ANNOTATED_CDS"/>
    <property type="molecule type" value="Genomic_RNA"/>
</dbReference>
<dbReference type="SMR" id="P0CK10"/>
<dbReference type="Proteomes" id="UP000007549">
    <property type="component" value="Genome"/>
</dbReference>
<dbReference type="GO" id="GO:0044219">
    <property type="term" value="C:host cell plasmodesma"/>
    <property type="evidence" value="ECO:0007669"/>
    <property type="project" value="UniProtKB-SubCell"/>
</dbReference>
<dbReference type="GO" id="GO:0004197">
    <property type="term" value="F:cysteine-type endopeptidase activity"/>
    <property type="evidence" value="ECO:0007669"/>
    <property type="project" value="InterPro"/>
</dbReference>
<dbReference type="GO" id="GO:0008236">
    <property type="term" value="F:serine-type peptidase activity"/>
    <property type="evidence" value="ECO:0007669"/>
    <property type="project" value="UniProtKB-KW"/>
</dbReference>
<dbReference type="GO" id="GO:0006508">
    <property type="term" value="P:proteolysis"/>
    <property type="evidence" value="ECO:0007669"/>
    <property type="project" value="UniProtKB-KW"/>
</dbReference>
<dbReference type="GO" id="GO:0052170">
    <property type="term" value="P:symbiont-mediated suppression of host innate immune response"/>
    <property type="evidence" value="ECO:0007669"/>
    <property type="project" value="UniProtKB-KW"/>
</dbReference>
<dbReference type="GO" id="GO:0046740">
    <property type="term" value="P:transport of virus in host, cell to cell"/>
    <property type="evidence" value="ECO:0007669"/>
    <property type="project" value="UniProtKB-KW"/>
</dbReference>
<dbReference type="GO" id="GO:0075523">
    <property type="term" value="P:viral translational frameshifting"/>
    <property type="evidence" value="ECO:0007669"/>
    <property type="project" value="UniProtKB-KW"/>
</dbReference>
<dbReference type="Gene3D" id="3.90.70.150">
    <property type="entry name" value="Helper component proteinase"/>
    <property type="match status" value="1"/>
</dbReference>
<dbReference type="InterPro" id="IPR001456">
    <property type="entry name" value="HC-pro"/>
</dbReference>
<dbReference type="InterPro" id="IPR031159">
    <property type="entry name" value="HC_PRO_CPD_dom"/>
</dbReference>
<dbReference type="InterPro" id="IPR042308">
    <property type="entry name" value="HC_PRO_CPD_sf"/>
</dbReference>
<dbReference type="InterPro" id="IPR002540">
    <property type="entry name" value="Pept_S30_P1_potyvir"/>
</dbReference>
<dbReference type="InterPro" id="IPR039560">
    <property type="entry name" value="Potyvirid-P3"/>
</dbReference>
<dbReference type="Pfam" id="PF00851">
    <property type="entry name" value="Peptidase_C6"/>
    <property type="match status" value="1"/>
</dbReference>
<dbReference type="Pfam" id="PF01577">
    <property type="entry name" value="Peptidase_S30"/>
    <property type="match status" value="1"/>
</dbReference>
<dbReference type="Pfam" id="PF13608">
    <property type="entry name" value="Potyvirid-P3"/>
    <property type="match status" value="1"/>
</dbReference>
<dbReference type="PROSITE" id="PS51744">
    <property type="entry name" value="HC_PRO_CPD"/>
    <property type="match status" value="1"/>
</dbReference>
<dbReference type="PROSITE" id="PS51871">
    <property type="entry name" value="PV_P1_PRO"/>
    <property type="match status" value="1"/>
</dbReference>